<accession>C1DEF3</accession>
<protein>
    <recommendedName>
        <fullName evidence="1">Ion-translocating oxidoreductase complex subunit A</fullName>
        <ecNumber evidence="1">7.-.-.-</ecNumber>
    </recommendedName>
    <alternativeName>
        <fullName evidence="1">Rnf electron transport complex subunit A</fullName>
    </alternativeName>
</protein>
<keyword id="KW-0997">Cell inner membrane</keyword>
<keyword id="KW-1003">Cell membrane</keyword>
<keyword id="KW-0249">Electron transport</keyword>
<keyword id="KW-0472">Membrane</keyword>
<keyword id="KW-1278">Translocase</keyword>
<keyword id="KW-0812">Transmembrane</keyword>
<keyword id="KW-1133">Transmembrane helix</keyword>
<keyword id="KW-0813">Transport</keyword>
<comment type="function">
    <text evidence="1">Part of a membrane-bound complex that couples electron transfer with translocation of ions across the membrane.</text>
</comment>
<comment type="subunit">
    <text evidence="1">The complex is composed of six subunits: RnfA, RnfB, RnfC, RnfD, RnfE and RnfG.</text>
</comment>
<comment type="subcellular location">
    <subcellularLocation>
        <location evidence="1">Cell inner membrane</location>
        <topology evidence="1">Multi-pass membrane protein</topology>
    </subcellularLocation>
</comment>
<comment type="similarity">
    <text evidence="1">Belongs to the NqrDE/RnfAE family.</text>
</comment>
<evidence type="ECO:0000255" key="1">
    <source>
        <dbReference type="HAMAP-Rule" id="MF_00459"/>
    </source>
</evidence>
<gene>
    <name evidence="1" type="primary">rnfA</name>
    <name type="ordered locus">Avin_19270</name>
</gene>
<dbReference type="EC" id="7.-.-.-" evidence="1"/>
<dbReference type="EMBL" id="CP001157">
    <property type="protein sequence ID" value="ACO78138.1"/>
    <property type="molecule type" value="Genomic_DNA"/>
</dbReference>
<dbReference type="RefSeq" id="WP_012700547.1">
    <property type="nucleotide sequence ID" value="NC_012560.1"/>
</dbReference>
<dbReference type="SMR" id="C1DEF3"/>
<dbReference type="STRING" id="322710.Avin_19270"/>
<dbReference type="EnsemblBacteria" id="ACO78138">
    <property type="protein sequence ID" value="ACO78138"/>
    <property type="gene ID" value="Avin_19270"/>
</dbReference>
<dbReference type="GeneID" id="88185169"/>
<dbReference type="KEGG" id="avn:Avin_19270"/>
<dbReference type="eggNOG" id="COG4657">
    <property type="taxonomic scope" value="Bacteria"/>
</dbReference>
<dbReference type="HOGENOM" id="CLU_095255_1_0_6"/>
<dbReference type="OrthoDB" id="9803631at2"/>
<dbReference type="Proteomes" id="UP000002424">
    <property type="component" value="Chromosome"/>
</dbReference>
<dbReference type="GO" id="GO:0005886">
    <property type="term" value="C:plasma membrane"/>
    <property type="evidence" value="ECO:0007669"/>
    <property type="project" value="UniProtKB-SubCell"/>
</dbReference>
<dbReference type="GO" id="GO:0022900">
    <property type="term" value="P:electron transport chain"/>
    <property type="evidence" value="ECO:0007669"/>
    <property type="project" value="UniProtKB-UniRule"/>
</dbReference>
<dbReference type="HAMAP" id="MF_00459">
    <property type="entry name" value="RsxA_RnfA"/>
    <property type="match status" value="1"/>
</dbReference>
<dbReference type="InterPro" id="IPR011293">
    <property type="entry name" value="Ion_transpt_RnfA/RsxA"/>
</dbReference>
<dbReference type="InterPro" id="IPR003667">
    <property type="entry name" value="NqrDE/RnfAE"/>
</dbReference>
<dbReference type="InterPro" id="IPR050133">
    <property type="entry name" value="NqrDE/RnfAE_oxidrdctase"/>
</dbReference>
<dbReference type="NCBIfam" id="NF003481">
    <property type="entry name" value="PRK05151.1"/>
    <property type="match status" value="1"/>
</dbReference>
<dbReference type="NCBIfam" id="TIGR01943">
    <property type="entry name" value="rnfA"/>
    <property type="match status" value="1"/>
</dbReference>
<dbReference type="PANTHER" id="PTHR30335">
    <property type="entry name" value="INTEGRAL MEMBRANE PROTEIN OF SOXR-REDUCING COMPLEX"/>
    <property type="match status" value="1"/>
</dbReference>
<dbReference type="PANTHER" id="PTHR30335:SF0">
    <property type="entry name" value="ION-TRANSLOCATING OXIDOREDUCTASE COMPLEX SUBUNIT A"/>
    <property type="match status" value="1"/>
</dbReference>
<dbReference type="Pfam" id="PF02508">
    <property type="entry name" value="Rnf-Nqr"/>
    <property type="match status" value="1"/>
</dbReference>
<dbReference type="PIRSF" id="PIRSF006102">
    <property type="entry name" value="NQR_DE"/>
    <property type="match status" value="1"/>
</dbReference>
<proteinExistence type="inferred from homology"/>
<name>RNFA_AZOVD</name>
<sequence length="194" mass="20719">MTELVLILVGAILVNNFVLVQFLGLCPFMGVSKRIETAIGLALATTFVLTLAAMCSYLLQRYVLVPLDLEYLRTIGFILVIAVVVQFTEMLVNKTSPLLYRVLGIFLPLITTNCIVLGVALLNANKAGYGFLESGINGFGAGLGFSLVLVLFAAMRERIAIADVPKPFKGAAIGLITAGLMSLAFMGFSGLIKP</sequence>
<organism>
    <name type="scientific">Azotobacter vinelandii (strain DJ / ATCC BAA-1303)</name>
    <dbReference type="NCBI Taxonomy" id="322710"/>
    <lineage>
        <taxon>Bacteria</taxon>
        <taxon>Pseudomonadati</taxon>
        <taxon>Pseudomonadota</taxon>
        <taxon>Gammaproteobacteria</taxon>
        <taxon>Pseudomonadales</taxon>
        <taxon>Pseudomonadaceae</taxon>
        <taxon>Azotobacter</taxon>
    </lineage>
</organism>
<feature type="chain" id="PRO_1000206283" description="Ion-translocating oxidoreductase complex subunit A">
    <location>
        <begin position="1"/>
        <end position="194"/>
    </location>
</feature>
<feature type="transmembrane region" description="Helical" evidence="1">
    <location>
        <begin position="4"/>
        <end position="24"/>
    </location>
</feature>
<feature type="transmembrane region" description="Helical" evidence="1">
    <location>
        <begin position="39"/>
        <end position="59"/>
    </location>
</feature>
<feature type="transmembrane region" description="Helical" evidence="1">
    <location>
        <begin position="72"/>
        <end position="92"/>
    </location>
</feature>
<feature type="transmembrane region" description="Helical" evidence="1">
    <location>
        <begin position="102"/>
        <end position="122"/>
    </location>
</feature>
<feature type="transmembrane region" description="Helical" evidence="1">
    <location>
        <begin position="135"/>
        <end position="155"/>
    </location>
</feature>
<feature type="transmembrane region" description="Helical" evidence="1">
    <location>
        <begin position="172"/>
        <end position="192"/>
    </location>
</feature>
<reference key="1">
    <citation type="journal article" date="2009" name="J. Bacteriol.">
        <title>Genome sequence of Azotobacter vinelandii, an obligate aerobe specialized to support diverse anaerobic metabolic processes.</title>
        <authorList>
            <person name="Setubal J.C."/>
            <person name="Dos Santos P."/>
            <person name="Goldman B.S."/>
            <person name="Ertesvaag H."/>
            <person name="Espin G."/>
            <person name="Rubio L.M."/>
            <person name="Valla S."/>
            <person name="Almeida N.F."/>
            <person name="Balasubramanian D."/>
            <person name="Cromes L."/>
            <person name="Curatti L."/>
            <person name="Du Z."/>
            <person name="Godsy E."/>
            <person name="Goodner B."/>
            <person name="Hellner-Burris K."/>
            <person name="Hernandez J.A."/>
            <person name="Houmiel K."/>
            <person name="Imperial J."/>
            <person name="Kennedy C."/>
            <person name="Larson T.J."/>
            <person name="Latreille P."/>
            <person name="Ligon L.S."/>
            <person name="Lu J."/>
            <person name="Maerk M."/>
            <person name="Miller N.M."/>
            <person name="Norton S."/>
            <person name="O'Carroll I.P."/>
            <person name="Paulsen I."/>
            <person name="Raulfs E.C."/>
            <person name="Roemer R."/>
            <person name="Rosser J."/>
            <person name="Segura D."/>
            <person name="Slater S."/>
            <person name="Stricklin S.L."/>
            <person name="Studholme D.J."/>
            <person name="Sun J."/>
            <person name="Viana C.J."/>
            <person name="Wallin E."/>
            <person name="Wang B."/>
            <person name="Wheeler C."/>
            <person name="Zhu H."/>
            <person name="Dean D.R."/>
            <person name="Dixon R."/>
            <person name="Wood D."/>
        </authorList>
    </citation>
    <scope>NUCLEOTIDE SEQUENCE [LARGE SCALE GENOMIC DNA]</scope>
    <source>
        <strain>DJ / ATCC BAA-1303</strain>
    </source>
</reference>